<comment type="function">
    <text>Transcriptional activator. Activates the transcription of a number of liver genes such as HNF3B.</text>
</comment>
<comment type="subcellular location">
    <subcellularLocation>
        <location>Nucleus</location>
    </subcellularLocation>
</comment>
<comment type="similarity">
    <text evidence="4">Belongs to the CUT homeobox family.</text>
</comment>
<comment type="caution">
    <text evidence="4">It is uncertain whether Met-1 or Met-20 is the initiator.</text>
</comment>
<comment type="sequence caution" evidence="4">
    <conflict type="frameshift">
        <sequence resource="EMBL-CDS" id="CAB38253"/>
    </conflict>
</comment>
<comment type="online information" name="Wikipedia">
    <link uri="https://en.wikipedia.org/wiki/Hepatocyte_nuclear_factors"/>
    <text>Hepatocyte nuclear factors entry</text>
</comment>
<dbReference type="EMBL" id="Y18198">
    <property type="protein sequence ID" value="CAB38253.1"/>
    <property type="status" value="ALT_FRAME"/>
    <property type="molecule type" value="mRNA"/>
</dbReference>
<dbReference type="EMBL" id="AC090340">
    <property type="status" value="NOT_ANNOTATED_CDS"/>
    <property type="molecule type" value="Genomic_DNA"/>
</dbReference>
<dbReference type="CCDS" id="CCDS42440.1"/>
<dbReference type="RefSeq" id="NP_004843.2">
    <property type="nucleotide sequence ID" value="NM_004852.3"/>
</dbReference>
<dbReference type="PDB" id="8T0F">
    <property type="method" value="X-ray"/>
    <property type="resolution" value="2.61 A"/>
    <property type="chains" value="A=330-485"/>
</dbReference>
<dbReference type="PDB" id="8T11">
    <property type="method" value="X-ray"/>
    <property type="resolution" value="2.91 A"/>
    <property type="chains" value="A=330-485"/>
</dbReference>
<dbReference type="PDBsum" id="8T0F"/>
<dbReference type="PDBsum" id="8T11"/>
<dbReference type="SMR" id="O95948"/>
<dbReference type="BioGRID" id="114865">
    <property type="interactions" value="6"/>
</dbReference>
<dbReference type="FunCoup" id="O95948">
    <property type="interactions" value="1557"/>
</dbReference>
<dbReference type="IntAct" id="O95948">
    <property type="interactions" value="2"/>
</dbReference>
<dbReference type="MINT" id="O95948"/>
<dbReference type="STRING" id="9606.ENSP00000419185"/>
<dbReference type="GlyGen" id="O95948">
    <property type="glycosylation" value="2 sites, 1 O-linked glycan (2 sites)"/>
</dbReference>
<dbReference type="iPTMnet" id="O95948"/>
<dbReference type="PhosphoSitePlus" id="O95948"/>
<dbReference type="BioMuta" id="ONECUT2"/>
<dbReference type="jPOST" id="O95948"/>
<dbReference type="MassIVE" id="O95948"/>
<dbReference type="PaxDb" id="9606-ENSP00000419185"/>
<dbReference type="PeptideAtlas" id="O95948"/>
<dbReference type="ProteomicsDB" id="51141"/>
<dbReference type="Pumba" id="O95948"/>
<dbReference type="TopDownProteomics" id="O95948"/>
<dbReference type="Antibodypedia" id="5415">
    <property type="antibodies" value="145 antibodies from 22 providers"/>
</dbReference>
<dbReference type="DNASU" id="9480"/>
<dbReference type="Ensembl" id="ENST00000491143.3">
    <property type="protein sequence ID" value="ENSP00000419185.2"/>
    <property type="gene ID" value="ENSG00000119547.6"/>
</dbReference>
<dbReference type="GeneID" id="9480"/>
<dbReference type="KEGG" id="hsa:9480"/>
<dbReference type="MANE-Select" id="ENST00000491143.3">
    <property type="protein sequence ID" value="ENSP00000419185.2"/>
    <property type="RefSeq nucleotide sequence ID" value="NM_004852.3"/>
    <property type="RefSeq protein sequence ID" value="NP_004843.2"/>
</dbReference>
<dbReference type="UCSC" id="uc002lgo.4">
    <property type="organism name" value="human"/>
</dbReference>
<dbReference type="AGR" id="HGNC:8139"/>
<dbReference type="CTD" id="9480"/>
<dbReference type="DisGeNET" id="9480"/>
<dbReference type="GeneCards" id="ONECUT2"/>
<dbReference type="HGNC" id="HGNC:8139">
    <property type="gene designation" value="ONECUT2"/>
</dbReference>
<dbReference type="HPA" id="ENSG00000119547">
    <property type="expression patterns" value="Tissue enhanced (gallbladder, intestine, liver, retina)"/>
</dbReference>
<dbReference type="MIM" id="604894">
    <property type="type" value="gene"/>
</dbReference>
<dbReference type="neXtProt" id="NX_O95948"/>
<dbReference type="OpenTargets" id="ENSG00000119547"/>
<dbReference type="PharmGKB" id="PA31925"/>
<dbReference type="VEuPathDB" id="HostDB:ENSG00000119547"/>
<dbReference type="eggNOG" id="KOG2252">
    <property type="taxonomic scope" value="Eukaryota"/>
</dbReference>
<dbReference type="GeneTree" id="ENSGT00950000183103"/>
<dbReference type="HOGENOM" id="CLU_018642_0_0_1"/>
<dbReference type="InParanoid" id="O95948"/>
<dbReference type="OMA" id="YKDHMSG"/>
<dbReference type="OrthoDB" id="10068888at2759"/>
<dbReference type="PAN-GO" id="O95948">
    <property type="GO annotations" value="4 GO annotations based on evolutionary models"/>
</dbReference>
<dbReference type="PhylomeDB" id="O95948"/>
<dbReference type="TreeFam" id="TF318206"/>
<dbReference type="PathwayCommons" id="O95948"/>
<dbReference type="SignaLink" id="O95948"/>
<dbReference type="BioGRID-ORCS" id="9480">
    <property type="hits" value="13 hits in 1173 CRISPR screens"/>
</dbReference>
<dbReference type="ChiTaRS" id="ONECUT2">
    <property type="organism name" value="human"/>
</dbReference>
<dbReference type="GenomeRNAi" id="9480"/>
<dbReference type="Pharos" id="O95948">
    <property type="development level" value="Tbio"/>
</dbReference>
<dbReference type="PRO" id="PR:O95948"/>
<dbReference type="Proteomes" id="UP000005640">
    <property type="component" value="Chromosome 18"/>
</dbReference>
<dbReference type="RNAct" id="O95948">
    <property type="molecule type" value="protein"/>
</dbReference>
<dbReference type="Bgee" id="ENSG00000119547">
    <property type="expression patterns" value="Expressed in jejunal mucosa and 65 other cell types or tissues"/>
</dbReference>
<dbReference type="GO" id="GO:0015629">
    <property type="term" value="C:actin cytoskeleton"/>
    <property type="evidence" value="ECO:0000314"/>
    <property type="project" value="HPA"/>
</dbReference>
<dbReference type="GO" id="GO:0000785">
    <property type="term" value="C:chromatin"/>
    <property type="evidence" value="ECO:0000247"/>
    <property type="project" value="NTNU_SB"/>
</dbReference>
<dbReference type="GO" id="GO:0005654">
    <property type="term" value="C:nucleoplasm"/>
    <property type="evidence" value="ECO:0000314"/>
    <property type="project" value="HPA"/>
</dbReference>
<dbReference type="GO" id="GO:0005634">
    <property type="term" value="C:nucleus"/>
    <property type="evidence" value="ECO:0000318"/>
    <property type="project" value="GO_Central"/>
</dbReference>
<dbReference type="GO" id="GO:0001228">
    <property type="term" value="F:DNA-binding transcription activator activity, RNA polymerase II-specific"/>
    <property type="evidence" value="ECO:0000314"/>
    <property type="project" value="NTNU_SB"/>
</dbReference>
<dbReference type="GO" id="GO:0000981">
    <property type="term" value="F:DNA-binding transcription factor activity, RNA polymerase II-specific"/>
    <property type="evidence" value="ECO:0000247"/>
    <property type="project" value="NTNU_SB"/>
</dbReference>
<dbReference type="GO" id="GO:0000978">
    <property type="term" value="F:RNA polymerase II cis-regulatory region sequence-specific DNA binding"/>
    <property type="evidence" value="ECO:0000314"/>
    <property type="project" value="NTNU_SB"/>
</dbReference>
<dbReference type="GO" id="GO:1990837">
    <property type="term" value="F:sequence-specific double-stranded DNA binding"/>
    <property type="evidence" value="ECO:0000314"/>
    <property type="project" value="ARUK-UCL"/>
</dbReference>
<dbReference type="GO" id="GO:0009887">
    <property type="term" value="P:animal organ morphogenesis"/>
    <property type="evidence" value="ECO:0000304"/>
    <property type="project" value="ProtInc"/>
</dbReference>
<dbReference type="GO" id="GO:0045165">
    <property type="term" value="P:cell fate commitment"/>
    <property type="evidence" value="ECO:0007669"/>
    <property type="project" value="Ensembl"/>
</dbReference>
<dbReference type="GO" id="GO:0060271">
    <property type="term" value="P:cilium assembly"/>
    <property type="evidence" value="ECO:0007669"/>
    <property type="project" value="Ensembl"/>
</dbReference>
<dbReference type="GO" id="GO:0031018">
    <property type="term" value="P:endocrine pancreas development"/>
    <property type="evidence" value="ECO:0007669"/>
    <property type="project" value="Ensembl"/>
</dbReference>
<dbReference type="GO" id="GO:0002064">
    <property type="term" value="P:epithelial cell development"/>
    <property type="evidence" value="ECO:0007669"/>
    <property type="project" value="Ensembl"/>
</dbReference>
<dbReference type="GO" id="GO:0001889">
    <property type="term" value="P:liver development"/>
    <property type="evidence" value="ECO:0007669"/>
    <property type="project" value="Ensembl"/>
</dbReference>
<dbReference type="GO" id="GO:1905319">
    <property type="term" value="P:mesenchymal stem cell migration"/>
    <property type="evidence" value="ECO:0007669"/>
    <property type="project" value="Ensembl"/>
</dbReference>
<dbReference type="GO" id="GO:0030512">
    <property type="term" value="P:negative regulation of transforming growth factor beta receptor signaling pathway"/>
    <property type="evidence" value="ECO:0007669"/>
    <property type="project" value="Ensembl"/>
</dbReference>
<dbReference type="GO" id="GO:0048935">
    <property type="term" value="P:peripheral nervous system neuron development"/>
    <property type="evidence" value="ECO:0007669"/>
    <property type="project" value="Ensembl"/>
</dbReference>
<dbReference type="GO" id="GO:1905322">
    <property type="term" value="P:positive regulation of mesenchymal stem cell migration"/>
    <property type="evidence" value="ECO:0007669"/>
    <property type="project" value="Ensembl"/>
</dbReference>
<dbReference type="GO" id="GO:0045944">
    <property type="term" value="P:positive regulation of transcription by RNA polymerase II"/>
    <property type="evidence" value="ECO:0000314"/>
    <property type="project" value="NTNU_SB"/>
</dbReference>
<dbReference type="GO" id="GO:0001952">
    <property type="term" value="P:regulation of cell-matrix adhesion"/>
    <property type="evidence" value="ECO:0007669"/>
    <property type="project" value="Ensembl"/>
</dbReference>
<dbReference type="GO" id="GO:0006357">
    <property type="term" value="P:regulation of transcription by RNA polymerase II"/>
    <property type="evidence" value="ECO:0000318"/>
    <property type="project" value="GO_Central"/>
</dbReference>
<dbReference type="GO" id="GO:0007179">
    <property type="term" value="P:transforming growth factor beta receptor signaling pathway"/>
    <property type="evidence" value="ECO:0007669"/>
    <property type="project" value="Ensembl"/>
</dbReference>
<dbReference type="CDD" id="cd00086">
    <property type="entry name" value="homeodomain"/>
    <property type="match status" value="1"/>
</dbReference>
<dbReference type="FunFam" id="1.10.10.60:FF:000054">
    <property type="entry name" value="One cut domain family member"/>
    <property type="match status" value="1"/>
</dbReference>
<dbReference type="FunFam" id="1.10.260.40:FF:000005">
    <property type="entry name" value="One cut domain family member"/>
    <property type="match status" value="1"/>
</dbReference>
<dbReference type="Gene3D" id="1.10.10.60">
    <property type="entry name" value="Homeodomain-like"/>
    <property type="match status" value="1"/>
</dbReference>
<dbReference type="Gene3D" id="1.10.260.40">
    <property type="entry name" value="lambda repressor-like DNA-binding domains"/>
    <property type="match status" value="1"/>
</dbReference>
<dbReference type="InterPro" id="IPR003350">
    <property type="entry name" value="CUT_dom"/>
</dbReference>
<dbReference type="InterPro" id="IPR051649">
    <property type="entry name" value="CUT_Homeobox"/>
</dbReference>
<dbReference type="InterPro" id="IPR001356">
    <property type="entry name" value="HD"/>
</dbReference>
<dbReference type="InterPro" id="IPR009057">
    <property type="entry name" value="Homeodomain-like_sf"/>
</dbReference>
<dbReference type="InterPro" id="IPR010982">
    <property type="entry name" value="Lambda_DNA-bd_dom_sf"/>
</dbReference>
<dbReference type="PANTHER" id="PTHR14057:SF10">
    <property type="entry name" value="ONE CUT DOMAIN FAMILY MEMBER 2"/>
    <property type="match status" value="1"/>
</dbReference>
<dbReference type="PANTHER" id="PTHR14057">
    <property type="entry name" value="TRANSCRIPTION FACTOR ONECUT"/>
    <property type="match status" value="1"/>
</dbReference>
<dbReference type="Pfam" id="PF02376">
    <property type="entry name" value="CUT"/>
    <property type="match status" value="1"/>
</dbReference>
<dbReference type="Pfam" id="PF00046">
    <property type="entry name" value="Homeodomain"/>
    <property type="match status" value="1"/>
</dbReference>
<dbReference type="SMART" id="SM01109">
    <property type="entry name" value="CUT"/>
    <property type="match status" value="1"/>
</dbReference>
<dbReference type="SMART" id="SM00389">
    <property type="entry name" value="HOX"/>
    <property type="match status" value="1"/>
</dbReference>
<dbReference type="SUPFAM" id="SSF46689">
    <property type="entry name" value="Homeodomain-like"/>
    <property type="match status" value="1"/>
</dbReference>
<dbReference type="SUPFAM" id="SSF47413">
    <property type="entry name" value="lambda repressor-like DNA-binding domains"/>
    <property type="match status" value="1"/>
</dbReference>
<dbReference type="PROSITE" id="PS51042">
    <property type="entry name" value="CUT"/>
    <property type="match status" value="1"/>
</dbReference>
<dbReference type="PROSITE" id="PS50071">
    <property type="entry name" value="HOMEOBOX_2"/>
    <property type="match status" value="1"/>
</dbReference>
<accession>O95948</accession>
<evidence type="ECO:0000255" key="1">
    <source>
        <dbReference type="PROSITE-ProRule" id="PRU00108"/>
    </source>
</evidence>
<evidence type="ECO:0000255" key="2">
    <source>
        <dbReference type="PROSITE-ProRule" id="PRU00374"/>
    </source>
</evidence>
<evidence type="ECO:0000256" key="3">
    <source>
        <dbReference type="SAM" id="MobiDB-lite"/>
    </source>
</evidence>
<evidence type="ECO:0000305" key="4"/>
<evidence type="ECO:0007829" key="5">
    <source>
        <dbReference type="PDB" id="8T0F"/>
    </source>
</evidence>
<evidence type="ECO:0007829" key="6">
    <source>
        <dbReference type="PDB" id="8T11"/>
    </source>
</evidence>
<protein>
    <recommendedName>
        <fullName>One cut domain family member 2</fullName>
    </recommendedName>
    <alternativeName>
        <fullName>Hepatocyte nuclear factor 6-beta</fullName>
        <shortName>HNF-6-beta</shortName>
    </alternativeName>
    <alternativeName>
        <fullName>One cut homeobox 2</fullName>
    </alternativeName>
    <alternativeName>
        <fullName>Transcription factor ONECUT-2</fullName>
        <shortName>OC-2</shortName>
    </alternativeName>
</protein>
<name>ONEC2_HUMAN</name>
<organism>
    <name type="scientific">Homo sapiens</name>
    <name type="common">Human</name>
    <dbReference type="NCBI Taxonomy" id="9606"/>
    <lineage>
        <taxon>Eukaryota</taxon>
        <taxon>Metazoa</taxon>
        <taxon>Chordata</taxon>
        <taxon>Craniata</taxon>
        <taxon>Vertebrata</taxon>
        <taxon>Euteleostomi</taxon>
        <taxon>Mammalia</taxon>
        <taxon>Eutheria</taxon>
        <taxon>Euarchontoglires</taxon>
        <taxon>Primates</taxon>
        <taxon>Haplorrhini</taxon>
        <taxon>Catarrhini</taxon>
        <taxon>Hominidae</taxon>
        <taxon>Homo</taxon>
    </lineage>
</organism>
<sequence>MKAAYTAYRCLTKDLEGCAMNPELTMESLGTLHGPAGGGSGGGGGGGGGGGGGGPGHEQELLASPSPHHAGRGAAGSLRGPPPPPTAHQELGTAAAAAAAASRSAMVTSMASILDGGDYRPELSIPLHHAMSMSCDSSPPGMGMSNTYTTLTPLQPLPPISTVSDKFHHPHPHHHPHHHHHHHHQRLSGNVSGSFTLMRDERGLPAMNNLYSPYKEMPGMSQSLSPLAATPLGNGLGGLHNAQQSLPNYGPPGHDKMLSPNFDAHHTAMLTRGEQHLSRGLGTPPAAMMSHLNGLHHPGHTQSHGPVLAPSRERPPSSSSGSQVATSGQLEEINTKEVAQRITAELKRYSIPQAIFAQRVLCRSQGTLSDLLRNPKPWSKLKSGRETFRRMWKWLQEPEFQRMSALRLAACKRKEQEPNKDRNNSQKKSRLVFTDLQRRTLFAIFKENKRPSKEMQITISQQLGLELTTVSNFFMNARRRSLEKWQDDLSTGGSSSTSSTCTKA</sequence>
<keyword id="KW-0002">3D-structure</keyword>
<keyword id="KW-0010">Activator</keyword>
<keyword id="KW-0238">DNA-binding</keyword>
<keyword id="KW-0371">Homeobox</keyword>
<keyword id="KW-0539">Nucleus</keyword>
<keyword id="KW-1267">Proteomics identification</keyword>
<keyword id="KW-1185">Reference proteome</keyword>
<keyword id="KW-0804">Transcription</keyword>
<keyword id="KW-0805">Transcription regulation</keyword>
<proteinExistence type="evidence at protein level"/>
<reference key="1">
    <citation type="journal article" date="1999" name="J. Biol. Chem.">
        <title>OC-2, a novel mammalian member of the ONECUT class of homeodomain transcription factors whose function in liver partially overlaps with that of hepatocyte nuclear factor-6.</title>
        <authorList>
            <person name="Jacquemin P."/>
            <person name="Lannoy V."/>
            <person name="Rousseau G.G."/>
            <person name="Lemaigre F.P."/>
        </authorList>
    </citation>
    <scope>NUCLEOTIDE SEQUENCE [MRNA]</scope>
</reference>
<reference key="2">
    <citation type="journal article" date="2005" name="Nature">
        <title>DNA sequence and analysis of human chromosome 18.</title>
        <authorList>
            <person name="Nusbaum C."/>
            <person name="Zody M.C."/>
            <person name="Borowsky M.L."/>
            <person name="Kamal M."/>
            <person name="Kodira C.D."/>
            <person name="Taylor T.D."/>
            <person name="Whittaker C.A."/>
            <person name="Chang J.L."/>
            <person name="Cuomo C.A."/>
            <person name="Dewar K."/>
            <person name="FitzGerald M.G."/>
            <person name="Yang X."/>
            <person name="Abouelleil A."/>
            <person name="Allen N.R."/>
            <person name="Anderson S."/>
            <person name="Bloom T."/>
            <person name="Bugalter B."/>
            <person name="Butler J."/>
            <person name="Cook A."/>
            <person name="DeCaprio D."/>
            <person name="Engels R."/>
            <person name="Garber M."/>
            <person name="Gnirke A."/>
            <person name="Hafez N."/>
            <person name="Hall J.L."/>
            <person name="Norman C.H."/>
            <person name="Itoh T."/>
            <person name="Jaffe D.B."/>
            <person name="Kuroki Y."/>
            <person name="Lehoczky J."/>
            <person name="Lui A."/>
            <person name="Macdonald P."/>
            <person name="Mauceli E."/>
            <person name="Mikkelsen T.S."/>
            <person name="Naylor J.W."/>
            <person name="Nicol R."/>
            <person name="Nguyen C."/>
            <person name="Noguchi H."/>
            <person name="O'Leary S.B."/>
            <person name="Piqani B."/>
            <person name="Smith C.L."/>
            <person name="Talamas J.A."/>
            <person name="Topham K."/>
            <person name="Totoki Y."/>
            <person name="Toyoda A."/>
            <person name="Wain H.M."/>
            <person name="Young S.K."/>
            <person name="Zeng Q."/>
            <person name="Zimmer A.R."/>
            <person name="Fujiyama A."/>
            <person name="Hattori M."/>
            <person name="Birren B.W."/>
            <person name="Sakaki Y."/>
            <person name="Lander E.S."/>
        </authorList>
    </citation>
    <scope>NUCLEOTIDE SEQUENCE [LARGE SCALE GENOMIC DNA]</scope>
</reference>
<feature type="chain" id="PRO_0000202405" description="One cut domain family member 2">
    <location>
        <begin position="1"/>
        <end position="504"/>
    </location>
</feature>
<feature type="DNA-binding region" description="CUT" evidence="2">
    <location>
        <begin position="324"/>
        <end position="410"/>
    </location>
</feature>
<feature type="DNA-binding region" description="Homeobox" evidence="1">
    <location>
        <begin position="426"/>
        <end position="485"/>
    </location>
</feature>
<feature type="region of interest" description="Disordered" evidence="3">
    <location>
        <begin position="29"/>
        <end position="95"/>
    </location>
</feature>
<feature type="region of interest" description="Disordered" evidence="3">
    <location>
        <begin position="166"/>
        <end position="189"/>
    </location>
</feature>
<feature type="region of interest" description="Disordered" evidence="3">
    <location>
        <begin position="274"/>
        <end position="332"/>
    </location>
</feature>
<feature type="region of interest" description="Disordered" evidence="3">
    <location>
        <begin position="485"/>
        <end position="504"/>
    </location>
</feature>
<feature type="compositionally biased region" description="Gly residues" evidence="3">
    <location>
        <begin position="35"/>
        <end position="56"/>
    </location>
</feature>
<feature type="compositionally biased region" description="Basic residues" evidence="3">
    <location>
        <begin position="168"/>
        <end position="186"/>
    </location>
</feature>
<feature type="compositionally biased region" description="Low complexity" evidence="3">
    <location>
        <begin position="490"/>
        <end position="504"/>
    </location>
</feature>
<feature type="sequence conflict" description="In Ref. 1; CAB38253." evidence="4" ref="1">
    <original>G</original>
    <variation>R</variation>
    <location>
        <position position="17"/>
    </location>
</feature>
<feature type="sequence conflict" description="In Ref. 1; CAB38253." evidence="4" ref="1">
    <original>PA</original>
    <variation>AR</variation>
    <location>
        <begin position="35"/>
        <end position="36"/>
    </location>
</feature>
<feature type="sequence conflict" description="In Ref. 1; CAB38253." evidence="4" ref="1">
    <original>G</original>
    <variation>R</variation>
    <location>
        <position position="71"/>
    </location>
</feature>
<feature type="sequence conflict" description="In Ref. 1; CAB38253." evidence="4" ref="1">
    <original>AA</original>
    <variation>PR</variation>
    <location>
        <begin position="74"/>
        <end position="75"/>
    </location>
</feature>
<feature type="helix" evidence="5">
    <location>
        <begin position="335"/>
        <end position="349"/>
    </location>
</feature>
<feature type="helix" evidence="5">
    <location>
        <begin position="353"/>
        <end position="360"/>
    </location>
</feature>
<feature type="strand" evidence="6">
    <location>
        <begin position="361"/>
        <end position="363"/>
    </location>
</feature>
<feature type="helix" evidence="5">
    <location>
        <begin position="365"/>
        <end position="373"/>
    </location>
</feature>
<feature type="turn" evidence="5">
    <location>
        <begin position="378"/>
        <end position="380"/>
    </location>
</feature>
<feature type="strand" evidence="6">
    <location>
        <begin position="382"/>
        <end position="384"/>
    </location>
</feature>
<feature type="helix" evidence="5">
    <location>
        <begin position="385"/>
        <end position="396"/>
    </location>
</feature>
<feature type="helix" evidence="5">
    <location>
        <begin position="399"/>
        <end position="404"/>
    </location>
</feature>
<feature type="turn" evidence="5">
    <location>
        <begin position="405"/>
        <end position="407"/>
    </location>
</feature>
<feature type="helix" evidence="5">
    <location>
        <begin position="435"/>
        <end position="447"/>
    </location>
</feature>
<feature type="helix" evidence="5">
    <location>
        <begin position="453"/>
        <end position="463"/>
    </location>
</feature>
<feature type="helix" evidence="5">
    <location>
        <begin position="467"/>
        <end position="481"/>
    </location>
</feature>
<gene>
    <name type="primary">ONECUT2</name>
    <name type="synonym">HNF6B</name>
</gene>